<protein>
    <recommendedName>
        <fullName evidence="5">Bacitracin transport ATP-binding protein BcrA</fullName>
    </recommendedName>
</protein>
<organism>
    <name type="scientific">Enterococcus faecalis</name>
    <name type="common">Streptococcus faecalis</name>
    <dbReference type="NCBI Taxonomy" id="1351"/>
    <lineage>
        <taxon>Bacteria</taxon>
        <taxon>Bacillati</taxon>
        <taxon>Bacillota</taxon>
        <taxon>Bacilli</taxon>
        <taxon>Lactobacillales</taxon>
        <taxon>Enterococcaceae</taxon>
        <taxon>Enterococcus</taxon>
    </lineage>
</organism>
<keyword id="KW-0046">Antibiotic resistance</keyword>
<keyword id="KW-0067">ATP-binding</keyword>
<keyword id="KW-0547">Nucleotide-binding</keyword>
<keyword id="KW-0614">Plasmid</keyword>
<keyword id="KW-0813">Transport</keyword>
<accession>Q5WNX0</accession>
<reference key="1">
    <citation type="journal article" date="2004" name="Antimicrob. Agents Chemother.">
        <title>Acquired bacitracin resistance in Enterococcus faecalis is mediated by an ABC transporter and a novel regulatory protein, BcrR.</title>
        <authorList>
            <person name="Manson J.M."/>
            <person name="Keis S."/>
            <person name="Smith J.M.B."/>
            <person name="Cook G.M."/>
        </authorList>
    </citation>
    <scope>NUCLEOTIDE SEQUENCE [GENOMIC DNA]</scope>
    <scope>FUNCTION</scope>
    <scope>INDUCTION</scope>
    <scope>DISRUPTION PHENOTYPE</scope>
    <source>
        <strain>AR01/DGVS</strain>
    </source>
</reference>
<reference key="2">
    <citation type="journal article" date="2008" name="J. Biol. Chem.">
        <title>Molecular analysis of BcrR, a membrane-bound bacitracin sensor and DNA-binding protein from Enterococcus faecalis.</title>
        <authorList>
            <person name="Gauntlett J.C."/>
            <person name="Gebhard S."/>
            <person name="Keis S."/>
            <person name="Manson J.M."/>
            <person name="Pos K.M."/>
            <person name="Cook G.M."/>
        </authorList>
    </citation>
    <scope>INDUCTION</scope>
    <source>
        <strain>AR01/DGVS</strain>
    </source>
</reference>
<gene>
    <name evidence="4" type="primary">bcrA</name>
</gene>
<name>BCRA_ENTFL</name>
<evidence type="ECO:0000255" key="1">
    <source>
        <dbReference type="PROSITE-ProRule" id="PRU00434"/>
    </source>
</evidence>
<evidence type="ECO:0000269" key="2">
    <source>
    </source>
</evidence>
<evidence type="ECO:0000269" key="3">
    <source>
    </source>
</evidence>
<evidence type="ECO:0000303" key="4">
    <source>
    </source>
</evidence>
<evidence type="ECO:0000305" key="5"/>
<evidence type="ECO:0000305" key="6">
    <source>
    </source>
</evidence>
<geneLocation type="plasmid">
    <name>pJM01</name>
</geneLocation>
<proteinExistence type="evidence at transcript level"/>
<feature type="chain" id="PRO_0000447366" description="Bacitracin transport ATP-binding protein BcrA">
    <location>
        <begin position="1"/>
        <end position="308"/>
    </location>
</feature>
<feature type="domain" description="ABC transporter" evidence="1">
    <location>
        <begin position="8"/>
        <end position="236"/>
    </location>
</feature>
<feature type="binding site" evidence="1">
    <location>
        <begin position="40"/>
        <end position="47"/>
    </location>
    <ligand>
        <name>ATP</name>
        <dbReference type="ChEBI" id="CHEBI:30616"/>
    </ligand>
</feature>
<dbReference type="EMBL" id="AY496968">
    <property type="protein sequence ID" value="AAS78451.1"/>
    <property type="molecule type" value="Genomic_DNA"/>
</dbReference>
<dbReference type="RefSeq" id="WP_032491109.1">
    <property type="nucleotide sequence ID" value="NC_014726.1"/>
</dbReference>
<dbReference type="SMR" id="Q5WNX0"/>
<dbReference type="GO" id="GO:0005524">
    <property type="term" value="F:ATP binding"/>
    <property type="evidence" value="ECO:0007669"/>
    <property type="project" value="UniProtKB-KW"/>
</dbReference>
<dbReference type="GO" id="GO:0016887">
    <property type="term" value="F:ATP hydrolysis activity"/>
    <property type="evidence" value="ECO:0007669"/>
    <property type="project" value="InterPro"/>
</dbReference>
<dbReference type="GO" id="GO:0046677">
    <property type="term" value="P:response to antibiotic"/>
    <property type="evidence" value="ECO:0007669"/>
    <property type="project" value="UniProtKB-KW"/>
</dbReference>
<dbReference type="Gene3D" id="3.40.50.300">
    <property type="entry name" value="P-loop containing nucleotide triphosphate hydrolases"/>
    <property type="match status" value="1"/>
</dbReference>
<dbReference type="InterPro" id="IPR003593">
    <property type="entry name" value="AAA+_ATPase"/>
</dbReference>
<dbReference type="InterPro" id="IPR003439">
    <property type="entry name" value="ABC_transporter-like_ATP-bd"/>
</dbReference>
<dbReference type="InterPro" id="IPR017871">
    <property type="entry name" value="ABC_transporter-like_CS"/>
</dbReference>
<dbReference type="InterPro" id="IPR027417">
    <property type="entry name" value="P-loop_NTPase"/>
</dbReference>
<dbReference type="PANTHER" id="PTHR43335">
    <property type="entry name" value="ABC TRANSPORTER, ATP-BINDING PROTEIN"/>
    <property type="match status" value="1"/>
</dbReference>
<dbReference type="PANTHER" id="PTHR43335:SF8">
    <property type="entry name" value="ABC TRANSPORTER, ATP-BINDING PROTEIN"/>
    <property type="match status" value="1"/>
</dbReference>
<dbReference type="Pfam" id="PF00005">
    <property type="entry name" value="ABC_tran"/>
    <property type="match status" value="1"/>
</dbReference>
<dbReference type="SMART" id="SM00382">
    <property type="entry name" value="AAA"/>
    <property type="match status" value="1"/>
</dbReference>
<dbReference type="SUPFAM" id="SSF52540">
    <property type="entry name" value="P-loop containing nucleoside triphosphate hydrolases"/>
    <property type="match status" value="1"/>
</dbReference>
<dbReference type="PROSITE" id="PS00211">
    <property type="entry name" value="ABC_TRANSPORTER_1"/>
    <property type="match status" value="1"/>
</dbReference>
<dbReference type="PROSITE" id="PS50893">
    <property type="entry name" value="ABC_TRANSPORTER_2"/>
    <property type="match status" value="1"/>
</dbReference>
<comment type="function">
    <text evidence="2 6">Essential for high-level bacitracin resistance (PubMed:15388429). Part of the ABC transporter complex BcrAB. Probably responsible for energy coupling to the transport system (Probable).</text>
</comment>
<comment type="subunit">
    <text evidence="5">The complex is probably composed of two ATP-binding proteins (BcrA) and two transmembrane proteins (BcrB).</text>
</comment>
<comment type="induction">
    <text evidence="2 3">Transcription is activated by the regulatory protein BcrR in the presence of bacitracin.</text>
</comment>
<comment type="disruption phenotype">
    <text evidence="2">Disruption mutant is sensitive to bacitracin.</text>
</comment>
<comment type="similarity">
    <text evidence="5">Belongs to the ABC transporter superfamily.</text>
</comment>
<sequence length="308" mass="34291">MMIMEYVIETENLTKQYGETTVVNKINLHVPKGKIYGLLGRNGAGKTTAMKMMLQLAFPTDGTVRLFGTNYKENIHTLYSKVGSIIETPGFYSNLTGYENLQILAKLRGGVSKSGVEKALEVVGLHKEKRKVFSDYSLGMKQRLGIAAAIMHEPELLILDEPINGLDPIGISEIRSFLSKLSHENGTTIFISSHVLSEIEQIADVIGVMHEGHLVEEVNISELHKRNRKYTEFDVSDGKIAAKILESSYHMTDFTVQDGTIRIYDFSQSVGEINREFARNGLLITRINDSEENLEDYFSKLIGGGGIA</sequence>